<dbReference type="EMBL" id="AE008384">
    <property type="protein sequence ID" value="AAM31890.1"/>
    <property type="molecule type" value="Genomic_DNA"/>
</dbReference>
<dbReference type="RefSeq" id="WP_011034125.1">
    <property type="nucleotide sequence ID" value="NC_003901.1"/>
</dbReference>
<dbReference type="SMR" id="Q8PUY4"/>
<dbReference type="KEGG" id="mma:MM_2194"/>
<dbReference type="PATRIC" id="fig|192952.21.peg.2512"/>
<dbReference type="eggNOG" id="arCOG00368">
    <property type="taxonomic scope" value="Archaea"/>
</dbReference>
<dbReference type="HOGENOM" id="CLU_004785_0_1_2"/>
<dbReference type="Proteomes" id="UP000000595">
    <property type="component" value="Chromosome"/>
</dbReference>
<dbReference type="GO" id="GO:0005524">
    <property type="term" value="F:ATP binding"/>
    <property type="evidence" value="ECO:0007669"/>
    <property type="project" value="UniProtKB-UniRule"/>
</dbReference>
<dbReference type="GO" id="GO:0016887">
    <property type="term" value="F:ATP hydrolysis activity"/>
    <property type="evidence" value="ECO:0007669"/>
    <property type="project" value="UniProtKB-UniRule"/>
</dbReference>
<dbReference type="GO" id="GO:0008270">
    <property type="term" value="F:zinc ion binding"/>
    <property type="evidence" value="ECO:0007669"/>
    <property type="project" value="UniProtKB-UniRule"/>
</dbReference>
<dbReference type="GO" id="GO:0006302">
    <property type="term" value="P:double-strand break repair"/>
    <property type="evidence" value="ECO:0007669"/>
    <property type="project" value="UniProtKB-UniRule"/>
</dbReference>
<dbReference type="Gene3D" id="3.40.50.300">
    <property type="entry name" value="P-loop containing nucleotide triphosphate hydrolases"/>
    <property type="match status" value="2"/>
</dbReference>
<dbReference type="HAMAP" id="MF_00449">
    <property type="entry name" value="RAD50"/>
    <property type="match status" value="1"/>
</dbReference>
<dbReference type="InterPro" id="IPR027417">
    <property type="entry name" value="P-loop_NTPase"/>
</dbReference>
<dbReference type="InterPro" id="IPR038729">
    <property type="entry name" value="Rad50/SbcC_AAA"/>
</dbReference>
<dbReference type="InterPro" id="IPR022982">
    <property type="entry name" value="Rad50_ATPase_archaeal"/>
</dbReference>
<dbReference type="InterPro" id="IPR013134">
    <property type="entry name" value="Zn_hook_RAD50"/>
</dbReference>
<dbReference type="NCBIfam" id="NF002572">
    <property type="entry name" value="PRK02224.1"/>
    <property type="match status" value="1"/>
</dbReference>
<dbReference type="PANTHER" id="PTHR32114">
    <property type="entry name" value="ABC TRANSPORTER ABCH.3"/>
    <property type="match status" value="1"/>
</dbReference>
<dbReference type="PANTHER" id="PTHR32114:SF2">
    <property type="entry name" value="ABC TRANSPORTER ABCH.3"/>
    <property type="match status" value="1"/>
</dbReference>
<dbReference type="Pfam" id="PF13476">
    <property type="entry name" value="AAA_23"/>
    <property type="match status" value="1"/>
</dbReference>
<dbReference type="SUPFAM" id="SSF52540">
    <property type="entry name" value="P-loop containing nucleoside triphosphate hydrolases"/>
    <property type="match status" value="1"/>
</dbReference>
<dbReference type="PROSITE" id="PS51131">
    <property type="entry name" value="ZN_HOOK"/>
    <property type="match status" value="1"/>
</dbReference>
<evidence type="ECO:0000255" key="1">
    <source>
        <dbReference type="HAMAP-Rule" id="MF_00449"/>
    </source>
</evidence>
<sequence>MKLKNLYIENIRSYKKLDFTFEDGVTVISGVNGSGKSSLLEACFMGLFGSKILSKDFVLADMIFKGAESAKIHLGFEHLGREYLIEQAFRYSLKSENASNSRCVLFADGENIVDQATRTYEEVCALLNMDEEAYRNCAYIRQGEIDVLINAKPRDRQRMIDDLLQLGKLEEYRERAGYAKTAVRRLERDAKNSFLGVKAEIEGIESTEPVAAVNRLRQKVKETDAILEELNKKKEFAAARKGELDLRIAEYRERLQEIEVLKQAIRKSQEDKAACFKEKETFSEEVQVQRRVLLELGEENSGMREECGFGDLEIEALLLQQEKSESSAREKVNSGSKELALLLKEEETGVQALRELEKDKVETERVLVECRTSIGAANKEIEGYRANIKQLEEENKRLREKAGFGAAGEIASVIKELEEKESLLRDRKNEVSTKLGFALKEKESGDASLRELDSEMQSCRVAVSKGKSEIEALEKEIRDNSKAVLDFQEQKSEVFAGLKALGFTEEQLENLEDFNELLLENKNRLHGKEKELEVTLREIENTLRKNRELLAEGKCPTCGQELKGSGIACTAEECEEKKEKLSLELADIKLQRAELEKKLNRLKEAKKLEKQAYDYDIEIEKLLEKAKASEKLIDTHRTRIEEDSLKLESSGKRKQELEAAGSKLLLDIKALREQEKAAQKVHLESEKALREAKVFERKLAENASEIESLNGKIRTSLALIENYGQRLGELNEKLKAFAEKETQSKEKLEALELTLETARKNEEEAKKAHIESARLLGEAKKLQANLLRMQNIKHKISEFEAGIGNLAEKIGFFDREIVERSDRIRQLEGKLEGNRLEELQQKLARFEEAQVNITEKIREITAEKDTLLKEIGMIENSLKRLKELKEELKALENKRLYLEAVYNNADELENTYMRVRADMRARNIGALSILLNEMFSFMYTNNAYSHIELDPEYNLTVYRKDGTPLEPKLLSGGERAIFNLVLRCAIYRLLALGFGGDRPDGLPPMILDEPTVFLDRGHVRQLLKLIDMMRSIGVGQIIVVSHDESLIDSADHVFQVEKDPLTNMSSITKI</sequence>
<comment type="function">
    <text evidence="1">Part of the Rad50/Mre11 complex, which is involved in the early steps of DNA double-strand break (DSB) repair. The complex may facilitate opening of the processed DNA ends to aid in the recruitment of HerA and NurA. Rad50 controls the balance between DNA end bridging and DNA resection via ATP-dependent structural rearrangements of the Rad50/Mre11 complex.</text>
</comment>
<comment type="cofactor">
    <cofactor evidence="1">
        <name>Zn(2+)</name>
        <dbReference type="ChEBI" id="CHEBI:29105"/>
    </cofactor>
    <text evidence="1">Binds 1 zinc ion per homodimer.</text>
</comment>
<comment type="subunit">
    <text evidence="1">Homodimer. Forms a heterotetramer composed of two Mre11 subunits and two Rad50 subunits.</text>
</comment>
<comment type="domain">
    <text evidence="1">The two conserved Cys that bind zinc constitute the zinc-hook, which separates the large intramolecular coiled coil regions. The 2 Cys residues coordinate one molecule of zinc with the help of the 2 Cys residues of the zinc-hook of another Rad50 molecule, thereby forming a V-shaped homodimer.</text>
</comment>
<comment type="similarity">
    <text evidence="1">Belongs to the SMC family. RAD50 subfamily.</text>
</comment>
<accession>Q8PUY4</accession>
<proteinExistence type="inferred from homology"/>
<reference key="1">
    <citation type="journal article" date="2002" name="J. Mol. Microbiol. Biotechnol.">
        <title>The genome of Methanosarcina mazei: evidence for lateral gene transfer between Bacteria and Archaea.</title>
        <authorList>
            <person name="Deppenmeier U."/>
            <person name="Johann A."/>
            <person name="Hartsch T."/>
            <person name="Merkl R."/>
            <person name="Schmitz R.A."/>
            <person name="Martinez-Arias R."/>
            <person name="Henne A."/>
            <person name="Wiezer A."/>
            <person name="Baeumer S."/>
            <person name="Jacobi C."/>
            <person name="Brueggemann H."/>
            <person name="Lienard T."/>
            <person name="Christmann A."/>
            <person name="Boemecke M."/>
            <person name="Steckel S."/>
            <person name="Bhattacharyya A."/>
            <person name="Lykidis A."/>
            <person name="Overbeek R."/>
            <person name="Klenk H.-P."/>
            <person name="Gunsalus R.P."/>
            <person name="Fritz H.-J."/>
            <person name="Gottschalk G."/>
        </authorList>
    </citation>
    <scope>NUCLEOTIDE SEQUENCE [LARGE SCALE GENOMIC DNA]</scope>
    <source>
        <strain>ATCC BAA-159 / DSM 3647 / Goe1 / Go1 / JCM 11833 / OCM 88</strain>
    </source>
</reference>
<feature type="chain" id="PRO_0000138656" description="DNA double-strand break repair Rad50 ATPase">
    <location>
        <begin position="1"/>
        <end position="1070"/>
    </location>
</feature>
<feature type="domain" description="Zinc-hook" evidence="1">
    <location>
        <begin position="508"/>
        <end position="607"/>
    </location>
</feature>
<feature type="coiled-coil region" evidence="1">
    <location>
        <begin position="227"/>
        <end position="257"/>
    </location>
</feature>
<feature type="coiled-coil region" evidence="1">
    <location>
        <begin position="369"/>
        <end position="403"/>
    </location>
</feature>
<feature type="coiled-coil region" evidence="1">
    <location>
        <begin position="449"/>
        <end position="478"/>
    </location>
</feature>
<feature type="coiled-coil region" evidence="1">
    <location>
        <begin position="570"/>
        <end position="614"/>
    </location>
</feature>
<feature type="coiled-coil region" evidence="1">
    <location>
        <begin position="878"/>
        <end position="908"/>
    </location>
</feature>
<feature type="binding site" evidence="1">
    <location>
        <position position="12"/>
    </location>
    <ligand>
        <name>ATP</name>
        <dbReference type="ChEBI" id="CHEBI:30616"/>
    </ligand>
</feature>
<feature type="binding site" evidence="1">
    <location>
        <begin position="32"/>
        <end position="38"/>
    </location>
    <ligand>
        <name>ATP</name>
        <dbReference type="ChEBI" id="CHEBI:30616"/>
    </ligand>
</feature>
<feature type="binding site" evidence="1">
    <location>
        <position position="142"/>
    </location>
    <ligand>
        <name>ATP</name>
        <dbReference type="ChEBI" id="CHEBI:30616"/>
    </ligand>
</feature>
<feature type="binding site" evidence="1">
    <location>
        <position position="555"/>
    </location>
    <ligand>
        <name>Zn(2+)</name>
        <dbReference type="ChEBI" id="CHEBI:29105"/>
    </ligand>
</feature>
<feature type="binding site" evidence="1">
    <location>
        <position position="558"/>
    </location>
    <ligand>
        <name>Zn(2+)</name>
        <dbReference type="ChEBI" id="CHEBI:29105"/>
    </ligand>
</feature>
<feature type="binding site" evidence="1">
    <location>
        <begin position="969"/>
        <end position="974"/>
    </location>
    <ligand>
        <name>ATP</name>
        <dbReference type="ChEBI" id="CHEBI:30616"/>
    </ligand>
</feature>
<name>RAD50_METMA</name>
<protein>
    <recommendedName>
        <fullName evidence="1">DNA double-strand break repair Rad50 ATPase</fullName>
    </recommendedName>
</protein>
<gene>
    <name evidence="1" type="primary">rad50</name>
    <name type="ordered locus">MM_2194</name>
</gene>
<organism>
    <name type="scientific">Methanosarcina mazei (strain ATCC BAA-159 / DSM 3647 / Goe1 / Go1 / JCM 11833 / OCM 88)</name>
    <name type="common">Methanosarcina frisia</name>
    <dbReference type="NCBI Taxonomy" id="192952"/>
    <lineage>
        <taxon>Archaea</taxon>
        <taxon>Methanobacteriati</taxon>
        <taxon>Methanobacteriota</taxon>
        <taxon>Stenosarchaea group</taxon>
        <taxon>Methanomicrobia</taxon>
        <taxon>Methanosarcinales</taxon>
        <taxon>Methanosarcinaceae</taxon>
        <taxon>Methanosarcina</taxon>
    </lineage>
</organism>
<keyword id="KW-0067">ATP-binding</keyword>
<keyword id="KW-0175">Coiled coil</keyword>
<keyword id="KW-0227">DNA damage</keyword>
<keyword id="KW-0234">DNA repair</keyword>
<keyword id="KW-0378">Hydrolase</keyword>
<keyword id="KW-0479">Metal-binding</keyword>
<keyword id="KW-0547">Nucleotide-binding</keyword>
<keyword id="KW-0862">Zinc</keyword>